<evidence type="ECO:0000255" key="1">
    <source>
        <dbReference type="PROSITE-ProRule" id="PRU00520"/>
    </source>
</evidence>
<evidence type="ECO:0000256" key="2">
    <source>
        <dbReference type="SAM" id="MobiDB-lite"/>
    </source>
</evidence>
<evidence type="ECO:0000305" key="3"/>
<comment type="catalytic activity">
    <reaction>
        <text>an acyl phosphate + H2O = a carboxylate + phosphate + H(+)</text>
        <dbReference type="Rhea" id="RHEA:14965"/>
        <dbReference type="ChEBI" id="CHEBI:15377"/>
        <dbReference type="ChEBI" id="CHEBI:15378"/>
        <dbReference type="ChEBI" id="CHEBI:29067"/>
        <dbReference type="ChEBI" id="CHEBI:43474"/>
        <dbReference type="ChEBI" id="CHEBI:59918"/>
        <dbReference type="EC" id="3.6.1.7"/>
    </reaction>
</comment>
<comment type="similarity">
    <text evidence="3">Belongs to the acylphosphatase family.</text>
</comment>
<comment type="sequence caution" evidence="3">
    <conflict type="erroneous initiation">
        <sequence resource="EMBL-CDS" id="CAC49902"/>
    </conflict>
</comment>
<feature type="chain" id="PRO_0000326782" description="Acylphosphatase">
    <location>
        <begin position="1"/>
        <end position="95"/>
    </location>
</feature>
<feature type="domain" description="Acylphosphatase-like" evidence="1">
    <location>
        <begin position="7"/>
        <end position="94"/>
    </location>
</feature>
<feature type="region of interest" description="Disordered" evidence="2">
    <location>
        <begin position="76"/>
        <end position="95"/>
    </location>
</feature>
<feature type="compositionally biased region" description="Low complexity" evidence="2">
    <location>
        <begin position="76"/>
        <end position="88"/>
    </location>
</feature>
<feature type="active site" evidence="1">
    <location>
        <position position="22"/>
    </location>
</feature>
<feature type="active site" evidence="1">
    <location>
        <position position="40"/>
    </location>
</feature>
<dbReference type="EC" id="3.6.1.7"/>
<dbReference type="EMBL" id="AL591985">
    <property type="protein sequence ID" value="CAC49902.1"/>
    <property type="status" value="ALT_INIT"/>
    <property type="molecule type" value="Genomic_DNA"/>
</dbReference>
<dbReference type="PIR" id="F96029">
    <property type="entry name" value="F96029"/>
</dbReference>
<dbReference type="RefSeq" id="NP_438042.1">
    <property type="nucleotide sequence ID" value="NC_003078.1"/>
</dbReference>
<dbReference type="SMR" id="Q92TK9"/>
<dbReference type="EnsemblBacteria" id="CAC49902">
    <property type="protein sequence ID" value="CAC49902"/>
    <property type="gene ID" value="SM_b20590"/>
</dbReference>
<dbReference type="KEGG" id="sme:SM_b20590"/>
<dbReference type="PATRIC" id="fig|266834.11.peg.6426"/>
<dbReference type="eggNOG" id="COG1254">
    <property type="taxonomic scope" value="Bacteria"/>
</dbReference>
<dbReference type="HOGENOM" id="CLU_141932_3_2_5"/>
<dbReference type="OrthoDB" id="5295388at2"/>
<dbReference type="Proteomes" id="UP000001976">
    <property type="component" value="Plasmid pSymB"/>
</dbReference>
<dbReference type="GO" id="GO:0003998">
    <property type="term" value="F:acylphosphatase activity"/>
    <property type="evidence" value="ECO:0007669"/>
    <property type="project" value="UniProtKB-EC"/>
</dbReference>
<dbReference type="Gene3D" id="3.30.70.100">
    <property type="match status" value="1"/>
</dbReference>
<dbReference type="InterPro" id="IPR020456">
    <property type="entry name" value="Acylphosphatase"/>
</dbReference>
<dbReference type="InterPro" id="IPR001792">
    <property type="entry name" value="Acylphosphatase-like_dom"/>
</dbReference>
<dbReference type="InterPro" id="IPR036046">
    <property type="entry name" value="Acylphosphatase-like_dom_sf"/>
</dbReference>
<dbReference type="InterPro" id="IPR017968">
    <property type="entry name" value="Acylphosphatase_CS"/>
</dbReference>
<dbReference type="NCBIfam" id="NF010999">
    <property type="entry name" value="PRK14425.1"/>
    <property type="match status" value="1"/>
</dbReference>
<dbReference type="PANTHER" id="PTHR47268">
    <property type="entry name" value="ACYLPHOSPHATASE"/>
    <property type="match status" value="1"/>
</dbReference>
<dbReference type="PANTHER" id="PTHR47268:SF4">
    <property type="entry name" value="ACYLPHOSPHATASE"/>
    <property type="match status" value="1"/>
</dbReference>
<dbReference type="Pfam" id="PF00708">
    <property type="entry name" value="Acylphosphatase"/>
    <property type="match status" value="1"/>
</dbReference>
<dbReference type="PRINTS" id="PR00112">
    <property type="entry name" value="ACYLPHPHTASE"/>
</dbReference>
<dbReference type="SUPFAM" id="SSF54975">
    <property type="entry name" value="Acylphosphatase/BLUF domain-like"/>
    <property type="match status" value="1"/>
</dbReference>
<dbReference type="PROSITE" id="PS00150">
    <property type="entry name" value="ACYLPHOSPHATASE_1"/>
    <property type="match status" value="1"/>
</dbReference>
<dbReference type="PROSITE" id="PS00151">
    <property type="entry name" value="ACYLPHOSPHATASE_2"/>
    <property type="match status" value="1"/>
</dbReference>
<dbReference type="PROSITE" id="PS51160">
    <property type="entry name" value="ACYLPHOSPHATASE_3"/>
    <property type="match status" value="1"/>
</dbReference>
<protein>
    <recommendedName>
        <fullName>Acylphosphatase</fullName>
        <ecNumber>3.6.1.7</ecNumber>
    </recommendedName>
    <alternativeName>
        <fullName>Acylphosphate phosphohydrolase</fullName>
    </alternativeName>
</protein>
<accession>Q92TK9</accession>
<proteinExistence type="inferred from homology"/>
<gene>
    <name type="primary">acyP</name>
    <name type="ordered locus">RB1502</name>
    <name type="ORF">SMb20590</name>
</gene>
<keyword id="KW-0378">Hydrolase</keyword>
<keyword id="KW-0614">Plasmid</keyword>
<keyword id="KW-1185">Reference proteome</keyword>
<reference key="1">
    <citation type="journal article" date="2001" name="Proc. Natl. Acad. Sci. U.S.A.">
        <title>The complete sequence of the 1,683-kb pSymB megaplasmid from the N2-fixing endosymbiont Sinorhizobium meliloti.</title>
        <authorList>
            <person name="Finan T.M."/>
            <person name="Weidner S."/>
            <person name="Wong K."/>
            <person name="Buhrmester J."/>
            <person name="Chain P."/>
            <person name="Vorhoelter F.J."/>
            <person name="Hernandez-Lucas I."/>
            <person name="Becker A."/>
            <person name="Cowie A."/>
            <person name="Gouzy J."/>
            <person name="Golding B."/>
            <person name="Puehler A."/>
        </authorList>
    </citation>
    <scope>NUCLEOTIDE SEQUENCE [LARGE SCALE GENOMIC DNA]</scope>
    <source>
        <strain>1021</strain>
    </source>
</reference>
<reference key="2">
    <citation type="journal article" date="2001" name="Science">
        <title>The composite genome of the legume symbiont Sinorhizobium meliloti.</title>
        <authorList>
            <person name="Galibert F."/>
            <person name="Finan T.M."/>
            <person name="Long S.R."/>
            <person name="Puehler A."/>
            <person name="Abola P."/>
            <person name="Ampe F."/>
            <person name="Barloy-Hubler F."/>
            <person name="Barnett M.J."/>
            <person name="Becker A."/>
            <person name="Boistard P."/>
            <person name="Bothe G."/>
            <person name="Boutry M."/>
            <person name="Bowser L."/>
            <person name="Buhrmester J."/>
            <person name="Cadieu E."/>
            <person name="Capela D."/>
            <person name="Chain P."/>
            <person name="Cowie A."/>
            <person name="Davis R.W."/>
            <person name="Dreano S."/>
            <person name="Federspiel N.A."/>
            <person name="Fisher R.F."/>
            <person name="Gloux S."/>
            <person name="Godrie T."/>
            <person name="Goffeau A."/>
            <person name="Golding B."/>
            <person name="Gouzy J."/>
            <person name="Gurjal M."/>
            <person name="Hernandez-Lucas I."/>
            <person name="Hong A."/>
            <person name="Huizar L."/>
            <person name="Hyman R.W."/>
            <person name="Jones T."/>
            <person name="Kahn D."/>
            <person name="Kahn M.L."/>
            <person name="Kalman S."/>
            <person name="Keating D.H."/>
            <person name="Kiss E."/>
            <person name="Komp C."/>
            <person name="Lelaure V."/>
            <person name="Masuy D."/>
            <person name="Palm C."/>
            <person name="Peck M.C."/>
            <person name="Pohl T.M."/>
            <person name="Portetelle D."/>
            <person name="Purnelle B."/>
            <person name="Ramsperger U."/>
            <person name="Surzycki R."/>
            <person name="Thebault P."/>
            <person name="Vandenbol M."/>
            <person name="Vorhoelter F.J."/>
            <person name="Weidner S."/>
            <person name="Wells D.H."/>
            <person name="Wong K."/>
            <person name="Yeh K.-C."/>
            <person name="Batut J."/>
        </authorList>
    </citation>
    <scope>NUCLEOTIDE SEQUENCE [LARGE SCALE GENOMIC DNA]</scope>
    <source>
        <strain>1021</strain>
    </source>
</reference>
<name>ACYP_RHIME</name>
<geneLocation type="plasmid">
    <name>pSymB</name>
    <name>megaplasmid 2</name>
</geneLocation>
<organism>
    <name type="scientific">Rhizobium meliloti (strain 1021)</name>
    <name type="common">Ensifer meliloti</name>
    <name type="synonym">Sinorhizobium meliloti</name>
    <dbReference type="NCBI Taxonomy" id="266834"/>
    <lineage>
        <taxon>Bacteria</taxon>
        <taxon>Pseudomonadati</taxon>
        <taxon>Pseudomonadota</taxon>
        <taxon>Alphaproteobacteria</taxon>
        <taxon>Hyphomicrobiales</taxon>
        <taxon>Rhizobiaceae</taxon>
        <taxon>Sinorhizobium/Ensifer group</taxon>
        <taxon>Sinorhizobium</taxon>
    </lineage>
</organism>
<sequence>MTKDRRAALVRITGRVQGVCFRDWTREEAERLGLDGWVRNESDGSVTALIAGPDGAVSRMLDHFWKGPPGASVADVASEEASSAEAPAGFRITRG</sequence>